<sequence>MAKFRLSLVQFLVSPVKSDNLNKACKLIKEAAQKGAQIVALPECFNSPYGTKYFPEYAEKIPGESTELLSQVAKECGIYLIGGSIPEEDSGKFYNTCAVFGPDGTLLVKHRKIHLFDIDVPGKIRFQESETLSPGDSFSVFDTPYCKVGVGICYDMRFAELAQIYANKGCQLLVYPGAFNMTTGPAHWELLQRARALDNQVYVATASPARDEKASYVAWGHSTVVSPWGEVIAKAGFEETVISADIDLQYLAEIREQIPIRRQRRDNLYTVEEKKN</sequence>
<name>NIT2B_XENLA</name>
<evidence type="ECO:0000250" key="1">
    <source>
        <dbReference type="UniProtKB" id="Q9NQR4"/>
    </source>
</evidence>
<evidence type="ECO:0000255" key="2">
    <source>
        <dbReference type="PROSITE-ProRule" id="PRU00054"/>
    </source>
</evidence>
<evidence type="ECO:0000305" key="3"/>
<comment type="function">
    <text evidence="1">Has omega-amidase activity. The role of omega-amidase is to remove potentially toxic intermediates by converting 2-oxoglutaramate and 2-oxosuccinamate to biologically useful 2-oxoglutarate and oxaloacetate, respectively.</text>
</comment>
<comment type="catalytic activity">
    <reaction evidence="1">
        <text>2-oxoglutaramate + H2O = 2-oxoglutarate + NH4(+)</text>
        <dbReference type="Rhea" id="RHEA:32963"/>
        <dbReference type="ChEBI" id="CHEBI:15377"/>
        <dbReference type="ChEBI" id="CHEBI:16769"/>
        <dbReference type="ChEBI" id="CHEBI:16810"/>
        <dbReference type="ChEBI" id="CHEBI:28938"/>
        <dbReference type="EC" id="3.5.1.3"/>
    </reaction>
    <physiologicalReaction direction="left-to-right" evidence="1">
        <dbReference type="Rhea" id="RHEA:32964"/>
    </physiologicalReaction>
</comment>
<comment type="catalytic activity">
    <reaction evidence="1">
        <text>2-oxosuccinamate + H2O = oxaloacetate + NH4(+)</text>
        <dbReference type="Rhea" id="RHEA:59412"/>
        <dbReference type="ChEBI" id="CHEBI:15377"/>
        <dbReference type="ChEBI" id="CHEBI:16452"/>
        <dbReference type="ChEBI" id="CHEBI:28938"/>
        <dbReference type="ChEBI" id="CHEBI:57735"/>
        <dbReference type="EC" id="3.5.1.3"/>
    </reaction>
    <physiologicalReaction direction="left-to-right" evidence="1">
        <dbReference type="Rhea" id="RHEA:59413"/>
    </physiologicalReaction>
</comment>
<comment type="subunit">
    <text evidence="1">Homodimer.</text>
</comment>
<comment type="subcellular location">
    <subcellularLocation>
        <location evidence="1">Cytoplasm</location>
    </subcellularLocation>
</comment>
<comment type="similarity">
    <text evidence="3">Belongs to the carbon-nitrogen hydrolase superfamily. NIT1/NIT2 family.</text>
</comment>
<accession>Q6INI7</accession>
<keyword id="KW-0963">Cytoplasm</keyword>
<keyword id="KW-0378">Hydrolase</keyword>
<keyword id="KW-1185">Reference proteome</keyword>
<reference key="1">
    <citation type="submission" date="2004-06" db="EMBL/GenBank/DDBJ databases">
        <authorList>
            <consortium name="NIH - Xenopus Gene Collection (XGC) project"/>
        </authorList>
    </citation>
    <scope>NUCLEOTIDE SEQUENCE [LARGE SCALE MRNA]</scope>
    <source>
        <tissue>Embryo</tissue>
    </source>
</reference>
<gene>
    <name type="primary">nit2b</name>
</gene>
<protein>
    <recommendedName>
        <fullName>Omega-amidase NIT2-B</fullName>
        <ecNumber evidence="1">3.5.1.3</ecNumber>
    </recommendedName>
    <alternativeName>
        <fullName>Nitrilase homolog 2</fullName>
    </alternativeName>
</protein>
<proteinExistence type="evidence at transcript level"/>
<dbReference type="EC" id="3.5.1.3" evidence="1"/>
<dbReference type="EMBL" id="BC072293">
    <property type="protein sequence ID" value="AAH72293.1"/>
    <property type="molecule type" value="mRNA"/>
</dbReference>
<dbReference type="RefSeq" id="NP_001085409.1">
    <property type="nucleotide sequence ID" value="NM_001091940.1"/>
</dbReference>
<dbReference type="SMR" id="Q6INI7"/>
<dbReference type="DNASU" id="443835"/>
<dbReference type="GeneID" id="443835"/>
<dbReference type="KEGG" id="xla:443835"/>
<dbReference type="CTD" id="443835"/>
<dbReference type="OrthoDB" id="10250282at2759"/>
<dbReference type="Proteomes" id="UP000186698">
    <property type="component" value="Chromosome 2L"/>
</dbReference>
<dbReference type="Bgee" id="443835">
    <property type="expression patterns" value="Expressed in testis and 19 other cell types or tissues"/>
</dbReference>
<dbReference type="GO" id="GO:0005739">
    <property type="term" value="C:mitochondrion"/>
    <property type="evidence" value="ECO:0007669"/>
    <property type="project" value="TreeGrafter"/>
</dbReference>
<dbReference type="GO" id="GO:0106008">
    <property type="term" value="F:2-oxoglutaramate amidase activity"/>
    <property type="evidence" value="ECO:0007669"/>
    <property type="project" value="RHEA"/>
</dbReference>
<dbReference type="GO" id="GO:0050152">
    <property type="term" value="F:omega-amidase activity"/>
    <property type="evidence" value="ECO:0000318"/>
    <property type="project" value="GO_Central"/>
</dbReference>
<dbReference type="GO" id="GO:0006528">
    <property type="term" value="P:asparagine metabolic process"/>
    <property type="evidence" value="ECO:0000318"/>
    <property type="project" value="GO_Central"/>
</dbReference>
<dbReference type="GO" id="GO:0006541">
    <property type="term" value="P:glutamine metabolic process"/>
    <property type="evidence" value="ECO:0000318"/>
    <property type="project" value="GO_Central"/>
</dbReference>
<dbReference type="GO" id="GO:0006107">
    <property type="term" value="P:oxaloacetate metabolic process"/>
    <property type="evidence" value="ECO:0000318"/>
    <property type="project" value="GO_Central"/>
</dbReference>
<dbReference type="CDD" id="cd07572">
    <property type="entry name" value="nit"/>
    <property type="match status" value="1"/>
</dbReference>
<dbReference type="FunFam" id="3.60.110.10:FF:000002">
    <property type="entry name" value="Nitrilase family member 2"/>
    <property type="match status" value="1"/>
</dbReference>
<dbReference type="Gene3D" id="3.60.110.10">
    <property type="entry name" value="Carbon-nitrogen hydrolase"/>
    <property type="match status" value="1"/>
</dbReference>
<dbReference type="InterPro" id="IPR003010">
    <property type="entry name" value="C-N_Hydrolase"/>
</dbReference>
<dbReference type="InterPro" id="IPR036526">
    <property type="entry name" value="C-N_Hydrolase_sf"/>
</dbReference>
<dbReference type="InterPro" id="IPR045254">
    <property type="entry name" value="Nit1/2_C-N_Hydrolase"/>
</dbReference>
<dbReference type="PANTHER" id="PTHR23088">
    <property type="entry name" value="NITRILASE-RELATED"/>
    <property type="match status" value="1"/>
</dbReference>
<dbReference type="PANTHER" id="PTHR23088:SF30">
    <property type="entry name" value="OMEGA-AMIDASE NIT2"/>
    <property type="match status" value="1"/>
</dbReference>
<dbReference type="Pfam" id="PF00795">
    <property type="entry name" value="CN_hydrolase"/>
    <property type="match status" value="1"/>
</dbReference>
<dbReference type="SUPFAM" id="SSF56317">
    <property type="entry name" value="Carbon-nitrogen hydrolase"/>
    <property type="match status" value="1"/>
</dbReference>
<dbReference type="PROSITE" id="PS50263">
    <property type="entry name" value="CN_HYDROLASE"/>
    <property type="match status" value="1"/>
</dbReference>
<organism>
    <name type="scientific">Xenopus laevis</name>
    <name type="common">African clawed frog</name>
    <dbReference type="NCBI Taxonomy" id="8355"/>
    <lineage>
        <taxon>Eukaryota</taxon>
        <taxon>Metazoa</taxon>
        <taxon>Chordata</taxon>
        <taxon>Craniata</taxon>
        <taxon>Vertebrata</taxon>
        <taxon>Euteleostomi</taxon>
        <taxon>Amphibia</taxon>
        <taxon>Batrachia</taxon>
        <taxon>Anura</taxon>
        <taxon>Pipoidea</taxon>
        <taxon>Pipidae</taxon>
        <taxon>Xenopodinae</taxon>
        <taxon>Xenopus</taxon>
        <taxon>Xenopus</taxon>
    </lineage>
</organism>
<feature type="chain" id="PRO_0000320259" description="Omega-amidase NIT2-B">
    <location>
        <begin position="1"/>
        <end position="276"/>
    </location>
</feature>
<feature type="domain" description="CN hydrolase" evidence="2">
    <location>
        <begin position="4"/>
        <end position="248"/>
    </location>
</feature>
<feature type="active site" description="Proton acceptor" evidence="2">
    <location>
        <position position="43"/>
    </location>
</feature>
<feature type="active site" description="Proton donor" evidence="2">
    <location>
        <position position="112"/>
    </location>
</feature>
<feature type="active site" description="Nucleophile" evidence="2">
    <location>
        <position position="153"/>
    </location>
</feature>